<protein>
    <recommendedName>
        <fullName>Glutathione reductase</fullName>
        <shortName>GR</shortName>
        <shortName>GRase</shortName>
        <ecNumber>1.8.1.7</ecNumber>
    </recommendedName>
</protein>
<sequence length="450" mass="48712">MVKEYDYIVIGGGSGGIASANRAAMHGAKVILFEGKEVGGTCVNVGCVPKKVMWYGAQVAETLHRYAGEYGFDVTINNFDFATLKANRQAYIDRIHGSFERGFDSNGVERVYEYARFVDPHTVEVAGELYTAPHILIATGGHPLYPNIPGSEYGITSDGFFELDEVPKRTAVIGAGYIAVEVAGVLNALGSDTHLFVRKDRPLRTFDKDIIDVLVDEMAKSGPTLHMHANATEVVKNADDSLTISFDNEETITVDCLIWAVGRAANTSGFGLEKTGVELTERGNIYSDEFENTSVPGIYALGDVTGKLDLTPVAVKAGRQLSERLFNNKVDAKLDYTDVATVVFSHPAIGAIGLTEEKAIAKYGAENIKVYKSSFTPMYTALGDNRQLSTMKLVTLGEDEKIIGLHGIGYGVDEMIQGFSVAIKMGATKADFDNTVAIHPTGSEEFVTMR</sequence>
<feature type="chain" id="PRO_0000067979" description="Glutathione reductase">
    <location>
        <begin position="1"/>
        <end position="450"/>
    </location>
</feature>
<feature type="active site" description="Proton acceptor" evidence="2">
    <location>
        <position position="439"/>
    </location>
</feature>
<feature type="binding site" evidence="2">
    <location>
        <position position="14"/>
    </location>
    <ligand>
        <name>FAD</name>
        <dbReference type="ChEBI" id="CHEBI:57692"/>
    </ligand>
</feature>
<feature type="binding site" evidence="1">
    <location>
        <position position="14"/>
    </location>
    <ligand>
        <name>glutathione</name>
        <dbReference type="ChEBI" id="CHEBI:57925"/>
    </ligand>
</feature>
<feature type="binding site" evidence="2">
    <location>
        <position position="15"/>
    </location>
    <ligand>
        <name>FAD</name>
        <dbReference type="ChEBI" id="CHEBI:57692"/>
    </ligand>
</feature>
<feature type="binding site" evidence="2">
    <location>
        <position position="34"/>
    </location>
    <ligand>
        <name>FAD</name>
        <dbReference type="ChEBI" id="CHEBI:57692"/>
    </ligand>
</feature>
<feature type="binding site" evidence="2">
    <location>
        <position position="41"/>
    </location>
    <ligand>
        <name>FAD</name>
        <dbReference type="ChEBI" id="CHEBI:57692"/>
    </ligand>
</feature>
<feature type="binding site" evidence="2">
    <location>
        <position position="42"/>
    </location>
    <ligand>
        <name>FAD</name>
        <dbReference type="ChEBI" id="CHEBI:57692"/>
    </ligand>
</feature>
<feature type="binding site" evidence="2">
    <location>
        <position position="50"/>
    </location>
    <ligand>
        <name>FAD</name>
        <dbReference type="ChEBI" id="CHEBI:57692"/>
    </ligand>
</feature>
<feature type="binding site" evidence="2">
    <location>
        <position position="115"/>
    </location>
    <ligand>
        <name>FAD</name>
        <dbReference type="ChEBI" id="CHEBI:57692"/>
    </ligand>
</feature>
<feature type="binding site" evidence="2">
    <location>
        <position position="175"/>
    </location>
    <ligand>
        <name>NADP(+)</name>
        <dbReference type="ChEBI" id="CHEBI:58349"/>
    </ligand>
</feature>
<feature type="binding site" evidence="2">
    <location>
        <position position="178"/>
    </location>
    <ligand>
        <name>NADP(+)</name>
        <dbReference type="ChEBI" id="CHEBI:58349"/>
    </ligand>
</feature>
<feature type="binding site" evidence="2">
    <location>
        <position position="181"/>
    </location>
    <ligand>
        <name>NADP(+)</name>
        <dbReference type="ChEBI" id="CHEBI:58349"/>
    </ligand>
</feature>
<feature type="binding site" evidence="2">
    <location>
        <position position="198"/>
    </location>
    <ligand>
        <name>NADP(+)</name>
        <dbReference type="ChEBI" id="CHEBI:58349"/>
    </ligand>
</feature>
<feature type="binding site" evidence="2">
    <location>
        <position position="204"/>
    </location>
    <ligand>
        <name>NADP(+)</name>
        <dbReference type="ChEBI" id="CHEBI:58349"/>
    </ligand>
</feature>
<feature type="binding site" evidence="2">
    <location>
        <position position="262"/>
    </location>
    <ligand>
        <name>NADP(+)</name>
        <dbReference type="ChEBI" id="CHEBI:58349"/>
    </ligand>
</feature>
<feature type="binding site" evidence="2">
    <location>
        <position position="303"/>
    </location>
    <ligand>
        <name>FAD</name>
        <dbReference type="ChEBI" id="CHEBI:57692"/>
    </ligand>
</feature>
<feature type="binding site" evidence="2">
    <location>
        <position position="309"/>
    </location>
    <ligand>
        <name>NADP(+)</name>
        <dbReference type="ChEBI" id="CHEBI:58349"/>
    </ligand>
</feature>
<feature type="binding site" evidence="2">
    <location>
        <position position="311"/>
    </location>
    <ligand>
        <name>FAD</name>
        <dbReference type="ChEBI" id="CHEBI:57692"/>
    </ligand>
</feature>
<feature type="binding site" evidence="1">
    <location>
        <position position="319"/>
    </location>
    <ligand>
        <name>glutathione</name>
        <dbReference type="ChEBI" id="CHEBI:57925"/>
    </ligand>
</feature>
<feature type="binding site" evidence="2">
    <location>
        <position position="342"/>
    </location>
    <ligand>
        <name>NADP(+)</name>
        <dbReference type="ChEBI" id="CHEBI:58349"/>
    </ligand>
</feature>
<feature type="binding site" evidence="2">
    <location>
        <position position="439"/>
    </location>
    <ligand>
        <name>FAD</name>
        <dbReference type="ChEBI" id="CHEBI:57692"/>
    </ligand>
</feature>
<feature type="disulfide bond" description="Redox-active" evidence="2">
    <location>
        <begin position="42"/>
        <end position="47"/>
    </location>
</feature>
<reference key="1">
    <citation type="journal article" date="1995" name="Res. Microbiol.">
        <title>Characterization of the gor gene of the lactic acid bacterium Streptococcus thermophilus CNRZ368.</title>
        <authorList>
            <person name="Pebay M."/>
            <person name="Holl A.-C."/>
            <person name="Simonet J.-M."/>
            <person name="Decaris B."/>
        </authorList>
    </citation>
    <scope>NUCLEOTIDE SEQUENCE [GENOMIC DNA]</scope>
    <source>
        <strain>CNRZ 368</strain>
    </source>
</reference>
<gene>
    <name type="primary">gor</name>
</gene>
<dbReference type="EC" id="1.8.1.7"/>
<dbReference type="EMBL" id="L27672">
    <property type="protein sequence ID" value="AAB00353.1"/>
    <property type="molecule type" value="Genomic_DNA"/>
</dbReference>
<dbReference type="EMBL" id="Z29494">
    <property type="protein sequence ID" value="CAA82630.1"/>
    <property type="molecule type" value="Genomic_DNA"/>
</dbReference>
<dbReference type="PIR" id="S41386">
    <property type="entry name" value="S41386"/>
</dbReference>
<dbReference type="SMR" id="Q60151"/>
<dbReference type="KEGG" id="sths:AVT04_02840"/>
<dbReference type="eggNOG" id="COG1249">
    <property type="taxonomic scope" value="Bacteria"/>
</dbReference>
<dbReference type="OMA" id="MSKHYDY"/>
<dbReference type="GO" id="GO:0005829">
    <property type="term" value="C:cytosol"/>
    <property type="evidence" value="ECO:0007669"/>
    <property type="project" value="TreeGrafter"/>
</dbReference>
<dbReference type="GO" id="GO:0050660">
    <property type="term" value="F:flavin adenine dinucleotide binding"/>
    <property type="evidence" value="ECO:0007669"/>
    <property type="project" value="InterPro"/>
</dbReference>
<dbReference type="GO" id="GO:0004362">
    <property type="term" value="F:glutathione-disulfide reductase (NADPH) activity"/>
    <property type="evidence" value="ECO:0007669"/>
    <property type="project" value="UniProtKB-EC"/>
</dbReference>
<dbReference type="GO" id="GO:0050661">
    <property type="term" value="F:NADP binding"/>
    <property type="evidence" value="ECO:0007669"/>
    <property type="project" value="InterPro"/>
</dbReference>
<dbReference type="GO" id="GO:0045454">
    <property type="term" value="P:cell redox homeostasis"/>
    <property type="evidence" value="ECO:0007669"/>
    <property type="project" value="InterPro"/>
</dbReference>
<dbReference type="GO" id="GO:0034599">
    <property type="term" value="P:cellular response to oxidative stress"/>
    <property type="evidence" value="ECO:0007669"/>
    <property type="project" value="TreeGrafter"/>
</dbReference>
<dbReference type="GO" id="GO:0006749">
    <property type="term" value="P:glutathione metabolic process"/>
    <property type="evidence" value="ECO:0007669"/>
    <property type="project" value="InterPro"/>
</dbReference>
<dbReference type="FunFam" id="3.30.390.30:FF:000003">
    <property type="entry name" value="Glutathione reductase"/>
    <property type="match status" value="1"/>
</dbReference>
<dbReference type="FunFam" id="3.50.50.60:FF:000109">
    <property type="entry name" value="Glutathione reductase"/>
    <property type="match status" value="1"/>
</dbReference>
<dbReference type="Gene3D" id="3.30.390.30">
    <property type="match status" value="1"/>
</dbReference>
<dbReference type="Gene3D" id="3.50.50.60">
    <property type="entry name" value="FAD/NAD(P)-binding domain"/>
    <property type="match status" value="2"/>
</dbReference>
<dbReference type="InterPro" id="IPR036188">
    <property type="entry name" value="FAD/NAD-bd_sf"/>
</dbReference>
<dbReference type="InterPro" id="IPR023753">
    <property type="entry name" value="FAD/NAD-binding_dom"/>
</dbReference>
<dbReference type="InterPro" id="IPR016156">
    <property type="entry name" value="FAD/NAD-linked_Rdtase_dimer_sf"/>
</dbReference>
<dbReference type="InterPro" id="IPR006322">
    <property type="entry name" value="Glutathione_Rdtase_euk/bac"/>
</dbReference>
<dbReference type="InterPro" id="IPR046952">
    <property type="entry name" value="GSHR/TRXR-like"/>
</dbReference>
<dbReference type="InterPro" id="IPR001100">
    <property type="entry name" value="Pyr_nuc-diS_OxRdtase"/>
</dbReference>
<dbReference type="InterPro" id="IPR004099">
    <property type="entry name" value="Pyr_nucl-diS_OxRdtase_dimer"/>
</dbReference>
<dbReference type="InterPro" id="IPR012999">
    <property type="entry name" value="Pyr_OxRdtase_I_AS"/>
</dbReference>
<dbReference type="NCBIfam" id="TIGR01421">
    <property type="entry name" value="gluta_reduc_1"/>
    <property type="match status" value="1"/>
</dbReference>
<dbReference type="NCBIfam" id="NF004776">
    <property type="entry name" value="PRK06116.1"/>
    <property type="match status" value="1"/>
</dbReference>
<dbReference type="PANTHER" id="PTHR42737">
    <property type="entry name" value="GLUTATHIONE REDUCTASE"/>
    <property type="match status" value="1"/>
</dbReference>
<dbReference type="PANTHER" id="PTHR42737:SF2">
    <property type="entry name" value="GLUTATHIONE REDUCTASE"/>
    <property type="match status" value="1"/>
</dbReference>
<dbReference type="Pfam" id="PF07992">
    <property type="entry name" value="Pyr_redox_2"/>
    <property type="match status" value="1"/>
</dbReference>
<dbReference type="Pfam" id="PF02852">
    <property type="entry name" value="Pyr_redox_dim"/>
    <property type="match status" value="1"/>
</dbReference>
<dbReference type="PIRSF" id="PIRSF000350">
    <property type="entry name" value="Mercury_reductase_MerA"/>
    <property type="match status" value="1"/>
</dbReference>
<dbReference type="PRINTS" id="PR00368">
    <property type="entry name" value="FADPNR"/>
</dbReference>
<dbReference type="PRINTS" id="PR00411">
    <property type="entry name" value="PNDRDTASEI"/>
</dbReference>
<dbReference type="SUPFAM" id="SSF51905">
    <property type="entry name" value="FAD/NAD(P)-binding domain"/>
    <property type="match status" value="1"/>
</dbReference>
<dbReference type="SUPFAM" id="SSF55424">
    <property type="entry name" value="FAD/NAD-linked reductases, dimerisation (C-terminal) domain"/>
    <property type="match status" value="1"/>
</dbReference>
<dbReference type="PROSITE" id="PS00076">
    <property type="entry name" value="PYRIDINE_REDOX_1"/>
    <property type="match status" value="1"/>
</dbReference>
<accession>Q60151</accession>
<organism>
    <name type="scientific">Streptococcus thermophilus</name>
    <dbReference type="NCBI Taxonomy" id="1308"/>
    <lineage>
        <taxon>Bacteria</taxon>
        <taxon>Bacillati</taxon>
        <taxon>Bacillota</taxon>
        <taxon>Bacilli</taxon>
        <taxon>Lactobacillales</taxon>
        <taxon>Streptococcaceae</taxon>
        <taxon>Streptococcus</taxon>
    </lineage>
</organism>
<keyword id="KW-0963">Cytoplasm</keyword>
<keyword id="KW-1015">Disulfide bond</keyword>
<keyword id="KW-0274">FAD</keyword>
<keyword id="KW-0285">Flavoprotein</keyword>
<keyword id="KW-0521">NADP</keyword>
<keyword id="KW-0560">Oxidoreductase</keyword>
<keyword id="KW-0676">Redox-active center</keyword>
<proteinExistence type="inferred from homology"/>
<comment type="function">
    <text evidence="2">Catalyzes the reduction of glutathione disulfide (GSSG) to reduced glutathione (GSH). Constitutes the major mechanism to maintain a high GSH:GSSG ratio in the cytosol.</text>
</comment>
<comment type="catalytic activity">
    <reaction evidence="2">
        <text>2 glutathione + NADP(+) = glutathione disulfide + NADPH + H(+)</text>
        <dbReference type="Rhea" id="RHEA:11740"/>
        <dbReference type="ChEBI" id="CHEBI:15378"/>
        <dbReference type="ChEBI" id="CHEBI:57783"/>
        <dbReference type="ChEBI" id="CHEBI:57925"/>
        <dbReference type="ChEBI" id="CHEBI:58297"/>
        <dbReference type="ChEBI" id="CHEBI:58349"/>
        <dbReference type="EC" id="1.8.1.7"/>
    </reaction>
</comment>
<comment type="cofactor">
    <cofactor evidence="2">
        <name>FAD</name>
        <dbReference type="ChEBI" id="CHEBI:57692"/>
    </cofactor>
    <text evidence="2">Binds 1 FAD per subunit.</text>
</comment>
<comment type="subunit">
    <text evidence="2">Homodimer.</text>
</comment>
<comment type="subcellular location">
    <subcellularLocation>
        <location evidence="2">Cytoplasm</location>
    </subcellularLocation>
</comment>
<comment type="miscellaneous">
    <text evidence="2">The active site is a redox-active disulfide bond.</text>
</comment>
<comment type="similarity">
    <text evidence="3">Belongs to the class-I pyridine nucleotide-disulfide oxidoreductase family.</text>
</comment>
<name>GSHR_STRTR</name>
<evidence type="ECO:0000250" key="1">
    <source>
        <dbReference type="UniProtKB" id="P00390"/>
    </source>
</evidence>
<evidence type="ECO:0000250" key="2">
    <source>
        <dbReference type="UniProtKB" id="P06715"/>
    </source>
</evidence>
<evidence type="ECO:0000305" key="3"/>